<name>COAE_STAAC</name>
<organism>
    <name type="scientific">Staphylococcus aureus (strain COL)</name>
    <dbReference type="NCBI Taxonomy" id="93062"/>
    <lineage>
        <taxon>Bacteria</taxon>
        <taxon>Bacillati</taxon>
        <taxon>Bacillota</taxon>
        <taxon>Bacilli</taxon>
        <taxon>Bacillales</taxon>
        <taxon>Staphylococcaceae</taxon>
        <taxon>Staphylococcus</taxon>
    </lineage>
</organism>
<reference key="1">
    <citation type="journal article" date="2005" name="J. Bacteriol.">
        <title>Insights on evolution of virulence and resistance from the complete genome analysis of an early methicillin-resistant Staphylococcus aureus strain and a biofilm-producing methicillin-resistant Staphylococcus epidermidis strain.</title>
        <authorList>
            <person name="Gill S.R."/>
            <person name="Fouts D.E."/>
            <person name="Archer G.L."/>
            <person name="Mongodin E.F."/>
            <person name="DeBoy R.T."/>
            <person name="Ravel J."/>
            <person name="Paulsen I.T."/>
            <person name="Kolonay J.F."/>
            <person name="Brinkac L.M."/>
            <person name="Beanan M.J."/>
            <person name="Dodson R.J."/>
            <person name="Daugherty S.C."/>
            <person name="Madupu R."/>
            <person name="Angiuoli S.V."/>
            <person name="Durkin A.S."/>
            <person name="Haft D.H."/>
            <person name="Vamathevan J.J."/>
            <person name="Khouri H."/>
            <person name="Utterback T.R."/>
            <person name="Lee C."/>
            <person name="Dimitrov G."/>
            <person name="Jiang L."/>
            <person name="Qin H."/>
            <person name="Weidman J."/>
            <person name="Tran K."/>
            <person name="Kang K.H."/>
            <person name="Hance I.R."/>
            <person name="Nelson K.E."/>
            <person name="Fraser C.M."/>
        </authorList>
    </citation>
    <scope>NUCLEOTIDE SEQUENCE [LARGE SCALE GENOMIC DNA]</scope>
    <source>
        <strain>COL</strain>
    </source>
</reference>
<gene>
    <name evidence="1" type="primary">coaE</name>
    <name type="ordered locus">SACOL1735</name>
</gene>
<sequence>MPKVIGLTGGIASGKSTVSELLSVFGFKVVDADKAAREAVKKGSKGLAQVREVFGDEAIDENGEMNRRYMGDLVFNHPEKRLELNAIIHPIVRDIMEEEKQEYLKQGYNVIMDIPLLFENELENTVDEVWVVYTSESIQMDRLMQRNNLSLEDAKARVYSQISIDKKSRMADHVIDNLGDKLELKQNLERLLEEEGYIEKPNYGEED</sequence>
<feature type="chain" id="PRO_0000172997" description="Dephospho-CoA kinase">
    <location>
        <begin position="1"/>
        <end position="207"/>
    </location>
</feature>
<feature type="domain" description="DPCK" evidence="1">
    <location>
        <begin position="4"/>
        <end position="203"/>
    </location>
</feature>
<feature type="binding site" evidence="1">
    <location>
        <begin position="12"/>
        <end position="17"/>
    </location>
    <ligand>
        <name>ATP</name>
        <dbReference type="ChEBI" id="CHEBI:30616"/>
    </ligand>
</feature>
<proteinExistence type="inferred from homology"/>
<protein>
    <recommendedName>
        <fullName evidence="1">Dephospho-CoA kinase</fullName>
        <ecNumber evidence="1">2.7.1.24</ecNumber>
    </recommendedName>
    <alternativeName>
        <fullName evidence="1">Dephosphocoenzyme A kinase</fullName>
    </alternativeName>
</protein>
<comment type="function">
    <text evidence="1">Catalyzes the phosphorylation of the 3'-hydroxyl group of dephosphocoenzyme A to form coenzyme A.</text>
</comment>
<comment type="catalytic activity">
    <reaction evidence="1">
        <text>3'-dephospho-CoA + ATP = ADP + CoA + H(+)</text>
        <dbReference type="Rhea" id="RHEA:18245"/>
        <dbReference type="ChEBI" id="CHEBI:15378"/>
        <dbReference type="ChEBI" id="CHEBI:30616"/>
        <dbReference type="ChEBI" id="CHEBI:57287"/>
        <dbReference type="ChEBI" id="CHEBI:57328"/>
        <dbReference type="ChEBI" id="CHEBI:456216"/>
        <dbReference type="EC" id="2.7.1.24"/>
    </reaction>
</comment>
<comment type="pathway">
    <text evidence="1">Cofactor biosynthesis; coenzyme A biosynthesis; CoA from (R)-pantothenate: step 5/5.</text>
</comment>
<comment type="subcellular location">
    <subcellularLocation>
        <location evidence="1">Cytoplasm</location>
    </subcellularLocation>
</comment>
<comment type="similarity">
    <text evidence="1">Belongs to the CoaE family.</text>
</comment>
<dbReference type="EC" id="2.7.1.24" evidence="1"/>
<dbReference type="EMBL" id="CP000046">
    <property type="protein sequence ID" value="AAW36839.1"/>
    <property type="molecule type" value="Genomic_DNA"/>
</dbReference>
<dbReference type="RefSeq" id="WP_001127167.1">
    <property type="nucleotide sequence ID" value="NZ_JBGOFO010000003.1"/>
</dbReference>
<dbReference type="SMR" id="Q5HF85"/>
<dbReference type="KEGG" id="sac:SACOL1735"/>
<dbReference type="HOGENOM" id="CLU_057180_0_0_9"/>
<dbReference type="UniPathway" id="UPA00241">
    <property type="reaction ID" value="UER00356"/>
</dbReference>
<dbReference type="Proteomes" id="UP000000530">
    <property type="component" value="Chromosome"/>
</dbReference>
<dbReference type="GO" id="GO:0005737">
    <property type="term" value="C:cytoplasm"/>
    <property type="evidence" value="ECO:0007669"/>
    <property type="project" value="UniProtKB-SubCell"/>
</dbReference>
<dbReference type="GO" id="GO:0005524">
    <property type="term" value="F:ATP binding"/>
    <property type="evidence" value="ECO:0007669"/>
    <property type="project" value="UniProtKB-UniRule"/>
</dbReference>
<dbReference type="GO" id="GO:0004140">
    <property type="term" value="F:dephospho-CoA kinase activity"/>
    <property type="evidence" value="ECO:0007669"/>
    <property type="project" value="UniProtKB-UniRule"/>
</dbReference>
<dbReference type="GO" id="GO:0015937">
    <property type="term" value="P:coenzyme A biosynthetic process"/>
    <property type="evidence" value="ECO:0007669"/>
    <property type="project" value="UniProtKB-UniRule"/>
</dbReference>
<dbReference type="CDD" id="cd02022">
    <property type="entry name" value="DPCK"/>
    <property type="match status" value="1"/>
</dbReference>
<dbReference type="FunFam" id="3.40.50.300:FF:000991">
    <property type="entry name" value="Dephospho-CoA kinase"/>
    <property type="match status" value="1"/>
</dbReference>
<dbReference type="Gene3D" id="3.40.50.300">
    <property type="entry name" value="P-loop containing nucleotide triphosphate hydrolases"/>
    <property type="match status" value="1"/>
</dbReference>
<dbReference type="HAMAP" id="MF_00376">
    <property type="entry name" value="Dephospho_CoA_kinase"/>
    <property type="match status" value="1"/>
</dbReference>
<dbReference type="InterPro" id="IPR001977">
    <property type="entry name" value="Depp_CoAkinase"/>
</dbReference>
<dbReference type="InterPro" id="IPR027417">
    <property type="entry name" value="P-loop_NTPase"/>
</dbReference>
<dbReference type="NCBIfam" id="TIGR00152">
    <property type="entry name" value="dephospho-CoA kinase"/>
    <property type="match status" value="1"/>
</dbReference>
<dbReference type="PANTHER" id="PTHR10695:SF46">
    <property type="entry name" value="BIFUNCTIONAL COENZYME A SYNTHASE-RELATED"/>
    <property type="match status" value="1"/>
</dbReference>
<dbReference type="PANTHER" id="PTHR10695">
    <property type="entry name" value="DEPHOSPHO-COA KINASE-RELATED"/>
    <property type="match status" value="1"/>
</dbReference>
<dbReference type="Pfam" id="PF01121">
    <property type="entry name" value="CoaE"/>
    <property type="match status" value="1"/>
</dbReference>
<dbReference type="SUPFAM" id="SSF52540">
    <property type="entry name" value="P-loop containing nucleoside triphosphate hydrolases"/>
    <property type="match status" value="1"/>
</dbReference>
<dbReference type="PROSITE" id="PS51219">
    <property type="entry name" value="DPCK"/>
    <property type="match status" value="1"/>
</dbReference>
<accession>Q5HF85</accession>
<evidence type="ECO:0000255" key="1">
    <source>
        <dbReference type="HAMAP-Rule" id="MF_00376"/>
    </source>
</evidence>
<keyword id="KW-0067">ATP-binding</keyword>
<keyword id="KW-0173">Coenzyme A biosynthesis</keyword>
<keyword id="KW-0963">Cytoplasm</keyword>
<keyword id="KW-0418">Kinase</keyword>
<keyword id="KW-0547">Nucleotide-binding</keyword>
<keyword id="KW-0808">Transferase</keyword>